<evidence type="ECO:0000250" key="1">
    <source>
        <dbReference type="UniProtKB" id="P15880"/>
    </source>
</evidence>
<evidence type="ECO:0000250" key="2">
    <source>
        <dbReference type="UniProtKB" id="P25443"/>
    </source>
</evidence>
<evidence type="ECO:0000255" key="3">
    <source>
        <dbReference type="PROSITE-ProRule" id="PRU00268"/>
    </source>
</evidence>
<evidence type="ECO:0000256" key="4">
    <source>
        <dbReference type="SAM" id="MobiDB-lite"/>
    </source>
</evidence>
<evidence type="ECO:0000269" key="5">
    <source>
    </source>
</evidence>
<evidence type="ECO:0000305" key="6"/>
<evidence type="ECO:0007744" key="7">
    <source>
        <dbReference type="PDB" id="7CPU"/>
    </source>
</evidence>
<evidence type="ECO:0007744" key="8">
    <source>
        <dbReference type="PDB" id="7CPV"/>
    </source>
</evidence>
<evidence type="ECO:0007744" key="9">
    <source>
    </source>
</evidence>
<name>RS2_MOUSE</name>
<accession>P25444</accession>
<keyword id="KW-0002">3D-structure</keyword>
<keyword id="KW-0007">Acetylation</keyword>
<keyword id="KW-0164">Citrullination</keyword>
<keyword id="KW-0963">Cytoplasm</keyword>
<keyword id="KW-1017">Isopeptide bond</keyword>
<keyword id="KW-0539">Nucleus</keyword>
<keyword id="KW-0597">Phosphoprotein</keyword>
<keyword id="KW-1185">Reference proteome</keyword>
<keyword id="KW-0677">Repeat</keyword>
<keyword id="KW-0687">Ribonucleoprotein</keyword>
<keyword id="KW-0689">Ribosomal protein</keyword>
<keyword id="KW-0832">Ubl conjugation</keyword>
<feature type="initiator methionine" description="Removed" evidence="1">
    <location>
        <position position="1"/>
    </location>
</feature>
<feature type="chain" id="PRO_0000131674" description="Small ribosomal subunit protein uS5">
    <location>
        <begin position="2"/>
        <end position="293"/>
    </location>
</feature>
<feature type="domain" description="S5 DRBM" evidence="3">
    <location>
        <begin position="102"/>
        <end position="165"/>
    </location>
</feature>
<feature type="region of interest" description="Disordered" evidence="4">
    <location>
        <begin position="1"/>
        <end position="55"/>
    </location>
</feature>
<feature type="compositionally biased region" description="Gly residues" evidence="4">
    <location>
        <begin position="7"/>
        <end position="34"/>
    </location>
</feature>
<feature type="compositionally biased region" description="Basic residues" evidence="4">
    <location>
        <begin position="35"/>
        <end position="51"/>
    </location>
</feature>
<feature type="modified residue" description="N-acetylalanine" evidence="1">
    <location>
        <position position="2"/>
    </location>
</feature>
<feature type="modified residue" description="Phosphothreonine" evidence="1">
    <location>
        <position position="252"/>
    </location>
</feature>
<feature type="modified residue" description="N6-acetyllysine" evidence="1">
    <location>
        <position position="263"/>
    </location>
</feature>
<feature type="modified residue" description="Phosphoserine" evidence="9">
    <location>
        <position position="264"/>
    </location>
</feature>
<feature type="modified residue" description="Phosphothreonine" evidence="1">
    <location>
        <position position="270"/>
    </location>
</feature>
<feature type="modified residue" description="N6-acetyllysine; alternate" evidence="1">
    <location>
        <position position="275"/>
    </location>
</feature>
<feature type="modified residue" description="Phosphoserine" evidence="1">
    <location>
        <position position="281"/>
    </location>
</feature>
<feature type="cross-link" description="Glycyl lysine isopeptide (Lys-Gly) (interchain with G-Cter in ubiquitin)" evidence="1">
    <location>
        <position position="54"/>
    </location>
</feature>
<feature type="cross-link" description="Glycyl lysine isopeptide (Lys-Gly) (interchain with G-Cter in ubiquitin)" evidence="1">
    <location>
        <position position="58"/>
    </location>
</feature>
<feature type="cross-link" description="Glycyl lysine isopeptide (Lys-Gly) (interchain with G-Cter in SUMO1); alternate" evidence="1">
    <location>
        <position position="275"/>
    </location>
</feature>
<feature type="cross-link" description="Glycyl lysine isopeptide (Lys-Gly) (interchain with G-Cter in SUMO2); alternate" evidence="1">
    <location>
        <position position="275"/>
    </location>
</feature>
<feature type="cross-link" description="Glycyl lysine isopeptide (Lys-Gly) (interchain with G-Cter in ubiquitin); alternate" evidence="1">
    <location>
        <position position="275"/>
    </location>
</feature>
<feature type="sequence conflict" description="In Ref. 1; AAA40074." evidence="6" ref="1">
    <original>T</original>
    <variation>S</variation>
    <location>
        <position position="270"/>
    </location>
</feature>
<protein>
    <recommendedName>
        <fullName evidence="6">Small ribosomal subunit protein uS5</fullName>
    </recommendedName>
    <alternativeName>
        <fullName>40S ribosomal protein S2</fullName>
    </alternativeName>
    <alternativeName>
        <fullName>40S ribosomal protein S4</fullName>
    </alternativeName>
    <alternativeName>
        <fullName>Protein LLRep3</fullName>
    </alternativeName>
</protein>
<gene>
    <name type="primary">Rps2</name>
    <name type="synonym">Llrep3</name>
    <name type="synonym">Rps4</name>
</gene>
<reference key="1">
    <citation type="journal article" date="1988" name="Mol. Cell. Biol.">
        <title>A highly conserved mouse gene with a propensity to form pseudogenes in mammals.</title>
        <authorList>
            <person name="Heller D.L."/>
            <person name="Gianola K.M."/>
            <person name="Leinwand L.A."/>
        </authorList>
    </citation>
    <scope>NUCLEOTIDE SEQUENCE [MRNA]</scope>
</reference>
<reference key="2">
    <citation type="submission" date="2000-06" db="EMBL/GenBank/DDBJ databases">
        <authorList>
            <person name="Smith J.B."/>
            <person name="Nguyen T.T."/>
        </authorList>
    </citation>
    <scope>NUCLEOTIDE SEQUENCE [MRNA]</scope>
    <source>
        <strain>Swiss Webster</strain>
    </source>
</reference>
<reference key="3">
    <citation type="journal article" date="2004" name="Genome Res.">
        <title>The status, quality, and expansion of the NIH full-length cDNA project: the Mammalian Gene Collection (MGC).</title>
        <authorList>
            <consortium name="The MGC Project Team"/>
        </authorList>
    </citation>
    <scope>NUCLEOTIDE SEQUENCE [LARGE SCALE MRNA]</scope>
    <source>
        <strain>C57BL/6J</strain>
        <tissue>Mammary tumor</tissue>
    </source>
</reference>
<reference key="4">
    <citation type="journal article" date="2007" name="Proc. Natl. Acad. Sci. U.S.A.">
        <title>Large-scale phosphorylation analysis of mouse liver.</title>
        <authorList>
            <person name="Villen J."/>
            <person name="Beausoleil S.A."/>
            <person name="Gerber S.A."/>
            <person name="Gygi S.P."/>
        </authorList>
    </citation>
    <scope>IDENTIFICATION BY MASS SPECTROMETRY [LARGE SCALE ANALYSIS]</scope>
    <source>
        <tissue>Liver</tissue>
    </source>
</reference>
<reference key="5">
    <citation type="journal article" date="2010" name="Cell">
        <title>A tissue-specific atlas of mouse protein phosphorylation and expression.</title>
        <authorList>
            <person name="Huttlin E.L."/>
            <person name="Jedrychowski M.P."/>
            <person name="Elias J.E."/>
            <person name="Goswami T."/>
            <person name="Rad R."/>
            <person name="Beausoleil S.A."/>
            <person name="Villen J."/>
            <person name="Haas W."/>
            <person name="Sowa M.E."/>
            <person name="Gygi S.P."/>
        </authorList>
    </citation>
    <scope>PHOSPHORYLATION [LARGE SCALE ANALYSIS] AT SER-264</scope>
    <scope>IDENTIFICATION BY MASS SPECTROMETRY [LARGE SCALE ANALYSIS]</scope>
    <source>
        <tissue>Brain</tissue>
        <tissue>Brown adipose tissue</tissue>
        <tissue>Heart</tissue>
        <tissue>Kidney</tissue>
        <tissue>Liver</tissue>
        <tissue>Lung</tissue>
        <tissue>Pancreas</tissue>
        <tissue>Spleen</tissue>
        <tissue>Testis</tissue>
    </source>
</reference>
<reference evidence="7 8" key="6">
    <citation type="journal article" date="2022" name="Nature">
        <title>A male germ-cell-specific ribosome controls male fertility.</title>
        <authorList>
            <person name="Li H."/>
            <person name="Huo Y."/>
            <person name="He X."/>
            <person name="Yao L."/>
            <person name="Zhang H."/>
            <person name="Cui Y."/>
            <person name="Xiao H."/>
            <person name="Xie W."/>
            <person name="Zhang D."/>
            <person name="Wang Y."/>
            <person name="Zhang S."/>
            <person name="Tu H."/>
            <person name="Cheng Y."/>
            <person name="Guo Y."/>
            <person name="Cao X."/>
            <person name="Zhu Y."/>
            <person name="Jiang T."/>
            <person name="Guo X."/>
            <person name="Qin Y."/>
            <person name="Sha J."/>
        </authorList>
    </citation>
    <scope>STRUCTURE BY ELECTRON MICROSCOPY (3.03 ANGSTROMS) OF RIBOSOME</scope>
    <scope>FUNCTION</scope>
    <scope>SUBUNIT</scope>
    <scope>SUBCELLULAR LOCATION</scope>
</reference>
<proteinExistence type="evidence at protein level"/>
<comment type="function">
    <text evidence="2 5">Component of the ribosome, a large ribonucleoprotein complex responsible for the synthesis of proteins in the cell (PubMed:36517592). The small ribosomal subunit (SSU) binds messenger RNAs (mRNAs) and translates the encoded message by selecting cognate aminoacyl-transfer RNA (tRNA) molecules (PubMed:36517592). The large subunit (LSU) contains the ribosomal catalytic site termed the peptidyl transferase center (PTC), which catalyzes the formation of peptide bonds, thereby polymerizing the amino acids delivered by tRNAs into a polypeptide chain (PubMed:36517592). The nascent polypeptides leave the ribosome through a tunnel in the LSU and interact with protein factors that function in enzymatic processing, targeting, and the membrane insertion of nascent chains at the exit of the ribosomal tunnel (PubMed:36517592). Plays a role in the assembly and function of the 40S ribosomal subunit (By similarity). Mutations in this protein affects the control of translational fidelity (By similarity). Involved in nucleolar processing of pre-18S ribosomal RNA and ribosome assembly (By similarity).</text>
</comment>
<comment type="subunit">
    <text evidence="1 5">Component of the small ribosomal subunit (PubMed:36517592). Interacts with zinc finger protein ZNF277 (via zinc-finger domains); the interaction is direct; the interaction is extra-ribosomal (By similarity). Interaction with ZNF277 competes with the binding of RPS2 to protein arginine methyltransferase PRMT3 (By similarity).</text>
</comment>
<comment type="subcellular location">
    <subcellularLocation>
        <location evidence="5">Cytoplasm</location>
    </subcellularLocation>
    <subcellularLocation>
        <location evidence="1">Nucleus</location>
        <location evidence="1">Nucleolus</location>
    </subcellularLocation>
    <text evidence="1">Probably localized to nucleolus and cytoplasm in complex with ZNF277.</text>
</comment>
<comment type="PTM">
    <text evidence="1">Citrullinated by PADI4 in the Arg/Gly-rich region.</text>
</comment>
<comment type="PTM">
    <text evidence="1">Asymmetric arginine dimethylation by PRMT3 occurs at multiple sites in the Arg/Gly-rich region.</text>
</comment>
<comment type="PTM">
    <text evidence="1">Monoubiquitinated at Lys-54 and Lys-58 by RNF10 when a ribosome has stalled during translation, leading to its degradation by the proteasome. Deubiquitinated at Lys-54 and Lys-58 by USP10, preventing degradation by the proteasome and promoting 40S ribosome subunit recycling following ribosome dissociation.</text>
</comment>
<comment type="similarity">
    <text evidence="6">Belongs to the universal ribosomal protein uS5 family.</text>
</comment>
<comment type="sequence caution" evidence="6">
    <conflict type="frameshift">
        <sequence resource="EMBL-CDS" id="AAA40074"/>
    </conflict>
</comment>
<organism>
    <name type="scientific">Mus musculus</name>
    <name type="common">Mouse</name>
    <dbReference type="NCBI Taxonomy" id="10090"/>
    <lineage>
        <taxon>Eukaryota</taxon>
        <taxon>Metazoa</taxon>
        <taxon>Chordata</taxon>
        <taxon>Craniata</taxon>
        <taxon>Vertebrata</taxon>
        <taxon>Euteleostomi</taxon>
        <taxon>Mammalia</taxon>
        <taxon>Eutheria</taxon>
        <taxon>Euarchontoglires</taxon>
        <taxon>Glires</taxon>
        <taxon>Rodentia</taxon>
        <taxon>Myomorpha</taxon>
        <taxon>Muroidea</taxon>
        <taxon>Muridae</taxon>
        <taxon>Murinae</taxon>
        <taxon>Mus</taxon>
        <taxon>Mus</taxon>
    </lineage>
</organism>
<sequence>MADDAGAAGGPGGPGGPGLGGRGGFRGGFGSGLRGRGRGRGRGRGRGRGARGGKAEDKEWIPVTKLGRLVKDMKIKSLEEIYLFSLPIKESEIIDFFLGASLKDEVLKIMPVQKQTRAGQRTRFKAFVAIGDYNGHVGLGVKCSKEVATAIRGAIILAKLSIVPVRRGYWGNKIGKPHTVPCKVTGRCGSVLVRLIPAPRGTGIVSAPVPKKLLMMAGIDDCYTSARGCTATLGNFAKATFDAISKTYSYLTPDLWKETVFTKSPYQEFTDHLVKTHTRVSVQRTQAPAVATT</sequence>
<dbReference type="EMBL" id="M20632">
    <property type="protein sequence ID" value="AAA40074.1"/>
    <property type="status" value="ALT_FRAME"/>
    <property type="molecule type" value="mRNA"/>
</dbReference>
<dbReference type="EMBL" id="AF283559">
    <property type="protein sequence ID" value="AAG13953.1"/>
    <property type="molecule type" value="mRNA"/>
</dbReference>
<dbReference type="EMBL" id="BC002186">
    <property type="protein sequence ID" value="AAH02186.1"/>
    <property type="molecule type" value="mRNA"/>
</dbReference>
<dbReference type="CCDS" id="CCDS37493.1"/>
<dbReference type="PIR" id="A31139">
    <property type="entry name" value="A31139"/>
</dbReference>
<dbReference type="RefSeq" id="NP_032529.2">
    <property type="nucleotide sequence ID" value="NM_008503.5"/>
</dbReference>
<dbReference type="PDB" id="7CPU">
    <property type="method" value="EM"/>
    <property type="resolution" value="2.82 A"/>
    <property type="chains" value="SC=1-293"/>
</dbReference>
<dbReference type="PDB" id="7CPV">
    <property type="method" value="EM"/>
    <property type="resolution" value="3.03 A"/>
    <property type="chains" value="SC=1-293"/>
</dbReference>
<dbReference type="PDB" id="7LS1">
    <property type="method" value="EM"/>
    <property type="resolution" value="3.30 A"/>
    <property type="chains" value="J3=1-293"/>
</dbReference>
<dbReference type="PDB" id="7LS2">
    <property type="method" value="EM"/>
    <property type="resolution" value="3.10 A"/>
    <property type="chains" value="J3=1-293"/>
</dbReference>
<dbReference type="PDBsum" id="7CPU"/>
<dbReference type="PDBsum" id="7CPV"/>
<dbReference type="PDBsum" id="7LS1"/>
<dbReference type="PDBsum" id="7LS2"/>
<dbReference type="EMDB" id="EMD-23500"/>
<dbReference type="EMDB" id="EMD-23501"/>
<dbReference type="EMDB" id="EMD-30432"/>
<dbReference type="EMDB" id="EMD-30433"/>
<dbReference type="SMR" id="P25444"/>
<dbReference type="BioGRID" id="201174">
    <property type="interactions" value="121"/>
</dbReference>
<dbReference type="ComplexPortal" id="CPX-5261">
    <property type="entry name" value="40S cytosolic small ribosomal subunit"/>
</dbReference>
<dbReference type="FunCoup" id="P25444">
    <property type="interactions" value="2264"/>
</dbReference>
<dbReference type="STRING" id="10090.ENSMUSP00000092502"/>
<dbReference type="GlyGen" id="P25444">
    <property type="glycosylation" value="2 sites, 1 O-linked glycan (2 sites)"/>
</dbReference>
<dbReference type="iPTMnet" id="P25444"/>
<dbReference type="PhosphoSitePlus" id="P25444"/>
<dbReference type="SwissPalm" id="P25444"/>
<dbReference type="CPTAC" id="non-CPTAC-3872"/>
<dbReference type="jPOST" id="P25444"/>
<dbReference type="PaxDb" id="10090-ENSMUSP00000092502"/>
<dbReference type="PeptideAtlas" id="P25444"/>
<dbReference type="ProteomicsDB" id="260857"/>
<dbReference type="Pumba" id="P25444"/>
<dbReference type="TopDownProteomics" id="P25444"/>
<dbReference type="Antibodypedia" id="23349">
    <property type="antibodies" value="205 antibodies from 31 providers"/>
</dbReference>
<dbReference type="DNASU" id="16898"/>
<dbReference type="Ensembl" id="ENSMUST00000054289.13">
    <property type="protein sequence ID" value="ENSMUSP00000092502.4"/>
    <property type="gene ID" value="ENSMUSG00000044533.16"/>
</dbReference>
<dbReference type="Ensembl" id="ENSMUST00000170715.8">
    <property type="protein sequence ID" value="ENSMUSP00000131474.2"/>
    <property type="gene ID" value="ENSMUSG00000044533.16"/>
</dbReference>
<dbReference type="GeneID" id="16898"/>
<dbReference type="KEGG" id="mmu:16898"/>
<dbReference type="UCSC" id="uc008axy.2">
    <property type="organism name" value="mouse"/>
</dbReference>
<dbReference type="AGR" id="MGI:105110"/>
<dbReference type="CTD" id="6187"/>
<dbReference type="MGI" id="MGI:105110">
    <property type="gene designation" value="Rps2"/>
</dbReference>
<dbReference type="VEuPathDB" id="HostDB:ENSMUSG00000044533"/>
<dbReference type="eggNOG" id="KOG0877">
    <property type="taxonomic scope" value="Eukaryota"/>
</dbReference>
<dbReference type="GeneTree" id="ENSGT00940000153095"/>
<dbReference type="InParanoid" id="P25444"/>
<dbReference type="OMA" id="PYEEWSD"/>
<dbReference type="OrthoDB" id="10253125at2759"/>
<dbReference type="TreeFam" id="TF300806"/>
<dbReference type="Reactome" id="R-MMU-156827">
    <property type="pathway name" value="L13a-mediated translational silencing of Ceruloplasmin expression"/>
</dbReference>
<dbReference type="Reactome" id="R-MMU-1799339">
    <property type="pathway name" value="SRP-dependent cotranslational protein targeting to membrane"/>
</dbReference>
<dbReference type="Reactome" id="R-MMU-3214858">
    <property type="pathway name" value="RMTs methylate histone arginines"/>
</dbReference>
<dbReference type="Reactome" id="R-MMU-6791226">
    <property type="pathway name" value="Major pathway of rRNA processing in the nucleolus and cytosol"/>
</dbReference>
<dbReference type="Reactome" id="R-MMU-72649">
    <property type="pathway name" value="Translation initiation complex formation"/>
</dbReference>
<dbReference type="Reactome" id="R-MMU-72689">
    <property type="pathway name" value="Formation of a pool of free 40S subunits"/>
</dbReference>
<dbReference type="Reactome" id="R-MMU-72695">
    <property type="pathway name" value="Formation of the ternary complex, and subsequently, the 43S complex"/>
</dbReference>
<dbReference type="Reactome" id="R-MMU-72702">
    <property type="pathway name" value="Ribosomal scanning and start codon recognition"/>
</dbReference>
<dbReference type="Reactome" id="R-MMU-72706">
    <property type="pathway name" value="GTP hydrolysis and joining of the 60S ribosomal subunit"/>
</dbReference>
<dbReference type="Reactome" id="R-MMU-8876725">
    <property type="pathway name" value="Protein methylation"/>
</dbReference>
<dbReference type="Reactome" id="R-MMU-975956">
    <property type="pathway name" value="Nonsense Mediated Decay (NMD) independent of the Exon Junction Complex (EJC)"/>
</dbReference>
<dbReference type="Reactome" id="R-MMU-975957">
    <property type="pathway name" value="Nonsense Mediated Decay (NMD) enhanced by the Exon Junction Complex (EJC)"/>
</dbReference>
<dbReference type="BioGRID-ORCS" id="16898">
    <property type="hits" value="30 hits in 76 CRISPR screens"/>
</dbReference>
<dbReference type="CD-CODE" id="CE726F99">
    <property type="entry name" value="Postsynaptic density"/>
</dbReference>
<dbReference type="ChiTaRS" id="Rps2">
    <property type="organism name" value="mouse"/>
</dbReference>
<dbReference type="PRO" id="PR:P25444"/>
<dbReference type="Proteomes" id="UP000000589">
    <property type="component" value="Chromosome 17"/>
</dbReference>
<dbReference type="RNAct" id="P25444">
    <property type="molecule type" value="protein"/>
</dbReference>
<dbReference type="Bgee" id="ENSMUSG00000044533">
    <property type="expression patterns" value="Expressed in ventricular zone and 67 other cell types or tissues"/>
</dbReference>
<dbReference type="ExpressionAtlas" id="P25444">
    <property type="expression patterns" value="baseline and differential"/>
</dbReference>
<dbReference type="GO" id="GO:0005737">
    <property type="term" value="C:cytoplasm"/>
    <property type="evidence" value="ECO:0000303"/>
    <property type="project" value="ComplexPortal"/>
</dbReference>
<dbReference type="GO" id="GO:0005829">
    <property type="term" value="C:cytosol"/>
    <property type="evidence" value="ECO:0000304"/>
    <property type="project" value="Reactome"/>
</dbReference>
<dbReference type="GO" id="GO:0022627">
    <property type="term" value="C:cytosolic small ribosomal subunit"/>
    <property type="evidence" value="ECO:0000314"/>
    <property type="project" value="UniProtKB"/>
</dbReference>
<dbReference type="GO" id="GO:0005730">
    <property type="term" value="C:nucleolus"/>
    <property type="evidence" value="ECO:0007669"/>
    <property type="project" value="UniProtKB-SubCell"/>
</dbReference>
<dbReference type="GO" id="GO:0098794">
    <property type="term" value="C:postsynapse"/>
    <property type="evidence" value="ECO:0000303"/>
    <property type="project" value="SynGO"/>
</dbReference>
<dbReference type="GO" id="GO:0005840">
    <property type="term" value="C:ribosome"/>
    <property type="evidence" value="ECO:0000303"/>
    <property type="project" value="SynGO"/>
</dbReference>
<dbReference type="GO" id="GO:0045202">
    <property type="term" value="C:synapse"/>
    <property type="evidence" value="ECO:0000314"/>
    <property type="project" value="SynGO"/>
</dbReference>
<dbReference type="GO" id="GO:0003723">
    <property type="term" value="F:RNA binding"/>
    <property type="evidence" value="ECO:0007669"/>
    <property type="project" value="InterPro"/>
</dbReference>
<dbReference type="GO" id="GO:0003735">
    <property type="term" value="F:structural constituent of ribosome"/>
    <property type="evidence" value="ECO:0000314"/>
    <property type="project" value="UniProtKB"/>
</dbReference>
<dbReference type="GO" id="GO:0071353">
    <property type="term" value="P:cellular response to interleukin-4"/>
    <property type="evidence" value="ECO:0000314"/>
    <property type="project" value="MGI"/>
</dbReference>
<dbReference type="GO" id="GO:0002181">
    <property type="term" value="P:cytoplasmic translation"/>
    <property type="evidence" value="ECO:0000303"/>
    <property type="project" value="ComplexPortal"/>
</dbReference>
<dbReference type="FunFam" id="3.30.160.20:FF:000133">
    <property type="entry name" value="40S ribosomal protein S2"/>
    <property type="match status" value="1"/>
</dbReference>
<dbReference type="FunFam" id="3.30.230.10:FF:000004">
    <property type="entry name" value="40S ribosomal protein S2"/>
    <property type="match status" value="1"/>
</dbReference>
<dbReference type="Gene3D" id="3.30.160.20">
    <property type="match status" value="1"/>
</dbReference>
<dbReference type="Gene3D" id="3.30.230.10">
    <property type="match status" value="1"/>
</dbReference>
<dbReference type="InterPro" id="IPR020568">
    <property type="entry name" value="Ribosomal_Su5_D2-typ_SF"/>
</dbReference>
<dbReference type="InterPro" id="IPR000851">
    <property type="entry name" value="Ribosomal_uS5"/>
</dbReference>
<dbReference type="InterPro" id="IPR005324">
    <property type="entry name" value="Ribosomal_uS5_C"/>
</dbReference>
<dbReference type="InterPro" id="IPR005711">
    <property type="entry name" value="Ribosomal_uS5_euk/arc"/>
</dbReference>
<dbReference type="InterPro" id="IPR013810">
    <property type="entry name" value="Ribosomal_uS5_N"/>
</dbReference>
<dbReference type="InterPro" id="IPR018192">
    <property type="entry name" value="Ribosomal_uS5_N_CS"/>
</dbReference>
<dbReference type="InterPro" id="IPR014721">
    <property type="entry name" value="Ribsml_uS5_D2-typ_fold_subgr"/>
</dbReference>
<dbReference type="NCBIfam" id="TIGR01020">
    <property type="entry name" value="uS5_euk_arch"/>
    <property type="match status" value="1"/>
</dbReference>
<dbReference type="PANTHER" id="PTHR13718">
    <property type="entry name" value="RIBOSOMAL S SUBUNIT"/>
    <property type="match status" value="1"/>
</dbReference>
<dbReference type="PANTHER" id="PTHR13718:SF93">
    <property type="entry name" value="SMALL RIBOSOMAL SUBUNIT PROTEIN US5"/>
    <property type="match status" value="1"/>
</dbReference>
<dbReference type="Pfam" id="PF00333">
    <property type="entry name" value="Ribosomal_S5"/>
    <property type="match status" value="1"/>
</dbReference>
<dbReference type="Pfam" id="PF03719">
    <property type="entry name" value="Ribosomal_S5_C"/>
    <property type="match status" value="1"/>
</dbReference>
<dbReference type="SUPFAM" id="SSF54768">
    <property type="entry name" value="dsRNA-binding domain-like"/>
    <property type="match status" value="1"/>
</dbReference>
<dbReference type="SUPFAM" id="SSF54211">
    <property type="entry name" value="Ribosomal protein S5 domain 2-like"/>
    <property type="match status" value="1"/>
</dbReference>
<dbReference type="PROSITE" id="PS00585">
    <property type="entry name" value="RIBOSOMAL_S5"/>
    <property type="match status" value="1"/>
</dbReference>
<dbReference type="PROSITE" id="PS50881">
    <property type="entry name" value="S5_DSRBD"/>
    <property type="match status" value="1"/>
</dbReference>